<protein>
    <recommendedName>
        <fullName evidence="1">Large ribosomal subunit protein uL14</fullName>
    </recommendedName>
    <alternativeName>
        <fullName evidence="2">50S ribosomal protein L14</fullName>
    </alternativeName>
</protein>
<name>RL14_ECOK1</name>
<keyword id="KW-1185">Reference proteome</keyword>
<keyword id="KW-0687">Ribonucleoprotein</keyword>
<keyword id="KW-0689">Ribosomal protein</keyword>
<keyword id="KW-0694">RNA-binding</keyword>
<keyword id="KW-0699">rRNA-binding</keyword>
<sequence length="123" mass="13541">MIQEQTMLNVADNSGARRVMCIKVLGGSHRRYAGVGDIIKITIKEAIPRGKVKKGDVLKAVVVRTKKGVRRPDGSVIRFDGNACVLLNNNSEQPIGTRIFGPVTRELRSEKFMKIISLAPEVL</sequence>
<comment type="function">
    <text evidence="1">Binds to 23S rRNA. Forms part of two intersubunit bridges in the 70S ribosome.</text>
</comment>
<comment type="subunit">
    <text evidence="1">Part of the 50S ribosomal subunit. Forms a cluster with proteins L3 and L19. In the 70S ribosome, L14 and L19 interact and together make contacts with the 16S rRNA in bridges B5 and B8.</text>
</comment>
<comment type="similarity">
    <text evidence="1">Belongs to the universal ribosomal protein uL14 family.</text>
</comment>
<dbReference type="EMBL" id="CP000468">
    <property type="protein sequence ID" value="ABJ02789.1"/>
    <property type="molecule type" value="Genomic_DNA"/>
</dbReference>
<dbReference type="RefSeq" id="WP_000613955.1">
    <property type="nucleotide sequence ID" value="NZ_CADILS010000044.1"/>
</dbReference>
<dbReference type="SMR" id="A1AGJ9"/>
<dbReference type="GeneID" id="93778677"/>
<dbReference type="KEGG" id="ecv:APECO1_3139"/>
<dbReference type="HOGENOM" id="CLU_095071_2_1_6"/>
<dbReference type="Proteomes" id="UP000008216">
    <property type="component" value="Chromosome"/>
</dbReference>
<dbReference type="GO" id="GO:0022625">
    <property type="term" value="C:cytosolic large ribosomal subunit"/>
    <property type="evidence" value="ECO:0007669"/>
    <property type="project" value="TreeGrafter"/>
</dbReference>
<dbReference type="GO" id="GO:0070180">
    <property type="term" value="F:large ribosomal subunit rRNA binding"/>
    <property type="evidence" value="ECO:0007669"/>
    <property type="project" value="TreeGrafter"/>
</dbReference>
<dbReference type="GO" id="GO:0003735">
    <property type="term" value="F:structural constituent of ribosome"/>
    <property type="evidence" value="ECO:0007669"/>
    <property type="project" value="InterPro"/>
</dbReference>
<dbReference type="GO" id="GO:0006412">
    <property type="term" value="P:translation"/>
    <property type="evidence" value="ECO:0007669"/>
    <property type="project" value="UniProtKB-UniRule"/>
</dbReference>
<dbReference type="CDD" id="cd00337">
    <property type="entry name" value="Ribosomal_uL14"/>
    <property type="match status" value="1"/>
</dbReference>
<dbReference type="FunFam" id="2.40.150.20:FF:000001">
    <property type="entry name" value="50S ribosomal protein L14"/>
    <property type="match status" value="1"/>
</dbReference>
<dbReference type="Gene3D" id="2.40.150.20">
    <property type="entry name" value="Ribosomal protein L14"/>
    <property type="match status" value="1"/>
</dbReference>
<dbReference type="HAMAP" id="MF_01367">
    <property type="entry name" value="Ribosomal_uL14"/>
    <property type="match status" value="1"/>
</dbReference>
<dbReference type="InterPro" id="IPR000218">
    <property type="entry name" value="Ribosomal_uL14"/>
</dbReference>
<dbReference type="InterPro" id="IPR005745">
    <property type="entry name" value="Ribosomal_uL14_bac-type"/>
</dbReference>
<dbReference type="InterPro" id="IPR019972">
    <property type="entry name" value="Ribosomal_uL14_CS"/>
</dbReference>
<dbReference type="InterPro" id="IPR036853">
    <property type="entry name" value="Ribosomal_uL14_sf"/>
</dbReference>
<dbReference type="NCBIfam" id="TIGR01067">
    <property type="entry name" value="rplN_bact"/>
    <property type="match status" value="1"/>
</dbReference>
<dbReference type="PANTHER" id="PTHR11761">
    <property type="entry name" value="50S/60S RIBOSOMAL PROTEIN L14/L23"/>
    <property type="match status" value="1"/>
</dbReference>
<dbReference type="PANTHER" id="PTHR11761:SF3">
    <property type="entry name" value="LARGE RIBOSOMAL SUBUNIT PROTEIN UL14M"/>
    <property type="match status" value="1"/>
</dbReference>
<dbReference type="Pfam" id="PF00238">
    <property type="entry name" value="Ribosomal_L14"/>
    <property type="match status" value="1"/>
</dbReference>
<dbReference type="SMART" id="SM01374">
    <property type="entry name" value="Ribosomal_L14"/>
    <property type="match status" value="1"/>
</dbReference>
<dbReference type="SUPFAM" id="SSF50193">
    <property type="entry name" value="Ribosomal protein L14"/>
    <property type="match status" value="1"/>
</dbReference>
<dbReference type="PROSITE" id="PS00049">
    <property type="entry name" value="RIBOSOMAL_L14"/>
    <property type="match status" value="1"/>
</dbReference>
<reference key="1">
    <citation type="journal article" date="2007" name="J. Bacteriol.">
        <title>The genome sequence of avian pathogenic Escherichia coli strain O1:K1:H7 shares strong similarities with human extraintestinal pathogenic E. coli genomes.</title>
        <authorList>
            <person name="Johnson T.J."/>
            <person name="Kariyawasam S."/>
            <person name="Wannemuehler Y."/>
            <person name="Mangiamele P."/>
            <person name="Johnson S.J."/>
            <person name="Doetkott C."/>
            <person name="Skyberg J.A."/>
            <person name="Lynne A.M."/>
            <person name="Johnson J.R."/>
            <person name="Nolan L.K."/>
        </authorList>
    </citation>
    <scope>NUCLEOTIDE SEQUENCE [LARGE SCALE GENOMIC DNA]</scope>
</reference>
<proteinExistence type="inferred from homology"/>
<accession>A1AGJ9</accession>
<organism>
    <name type="scientific">Escherichia coli O1:K1 / APEC</name>
    <dbReference type="NCBI Taxonomy" id="405955"/>
    <lineage>
        <taxon>Bacteria</taxon>
        <taxon>Pseudomonadati</taxon>
        <taxon>Pseudomonadota</taxon>
        <taxon>Gammaproteobacteria</taxon>
        <taxon>Enterobacterales</taxon>
        <taxon>Enterobacteriaceae</taxon>
        <taxon>Escherichia</taxon>
    </lineage>
</organism>
<feature type="chain" id="PRO_1000055576" description="Large ribosomal subunit protein uL14">
    <location>
        <begin position="1"/>
        <end position="123"/>
    </location>
</feature>
<evidence type="ECO:0000255" key="1">
    <source>
        <dbReference type="HAMAP-Rule" id="MF_01367"/>
    </source>
</evidence>
<evidence type="ECO:0000305" key="2"/>
<gene>
    <name evidence="1" type="primary">rplN</name>
    <name type="ordered locus">Ecok1_32950</name>
    <name type="ORF">APECO1_3139</name>
</gene>